<keyword id="KW-0106">Calcium</keyword>
<keyword id="KW-0968">Cytoplasmic vesicle</keyword>
<keyword id="KW-0378">Hydrolase</keyword>
<keyword id="KW-0479">Metal-binding</keyword>
<keyword id="KW-0645">Protease</keyword>
<keyword id="KW-1185">Reference proteome</keyword>
<keyword id="KW-0677">Repeat</keyword>
<keyword id="KW-0788">Thiol protease</keyword>
<evidence type="ECO:0000250" key="1">
    <source>
        <dbReference type="UniProtKB" id="Q9UMQ6"/>
    </source>
</evidence>
<evidence type="ECO:0000255" key="2"/>
<evidence type="ECO:0000255" key="3">
    <source>
        <dbReference type="PROSITE-ProRule" id="PRU00239"/>
    </source>
</evidence>
<evidence type="ECO:0000255" key="4">
    <source>
        <dbReference type="PROSITE-ProRule" id="PRU00448"/>
    </source>
</evidence>
<evidence type="ECO:0000269" key="5">
    <source>
    </source>
</evidence>
<evidence type="ECO:0000269" key="6">
    <source>
    </source>
</evidence>
<evidence type="ECO:0000305" key="7"/>
<evidence type="ECO:0000312" key="8">
    <source>
        <dbReference type="EMBL" id="AAT27434.1"/>
    </source>
</evidence>
<sequence>MLNYSDISWAEKGMVATINHSRLKDKGVGQHQNAYNYKNQNYEDLRAECLRKGELFEDPFFPAEPRSIGVKNLGPNSEHMQNIYWQRPKDIIHNPQFITNDFSPTDICQGILGDCWLLAAIGSLTTCPKLLYRVVPRNQSFKKNYAGIFHFQLWQFGHWLNVVVDDRLPTRNNKLVFVHASHRQDFWSALLEKAYAKLIGSYGALSGGSTLEGLEDFTGGVAQCIPLQKPPGNMLRLLKKALEKSSLMGCSIEVTDNSEVETMTHNMLVRGHAYAVTGLEDVYYRDKLETLIRIQNPWGRVEWNGAWSDKATEWEEVSPDVRVQLLHKKDDGDFWMSYEDFMSNFTLLEICNLTPDALNTWDYKSRWHSTFYEGSWRRGSTAGGCRNHPETFWSNPQFKISLPEVDDPEDDSEKNEMVCTCLVALMQKNWRHAREGPQLLTIGFVIFSVPKEFQNLRDIHLKKDFFLKYRDHGFSEIFINSREVNSHLRLPPGEYVIIPSTYEPHKDADFLLRVFTEKHSETWLLDDANRFEHLQEETVTDKDLDKDSLQLFKIMANEDGEVDMYALHKLLNRMTAKLRNFKTKGFSLEVCRRMINLLDKDGSGKLELHEFQVLWKKIKKWTEIFKECDEDRSGNLNSYEMRLAIEKAGIKMNNRVTEVVVARYSDNMIVDFDSFLNCFLRLKAMFAFFLSMDTKKTGSICLDINQWLQITMWG</sequence>
<dbReference type="EC" id="3.4.22.-"/>
<dbReference type="EMBL" id="AY578330">
    <property type="protein sequence ID" value="AAT27434.1"/>
    <property type="molecule type" value="mRNA"/>
</dbReference>
<dbReference type="CCDS" id="CCDS50121.1"/>
<dbReference type="RefSeq" id="NP_001013789.1">
    <property type="nucleotide sequence ID" value="NM_001013767.2"/>
</dbReference>
<dbReference type="SMR" id="Q6J756"/>
<dbReference type="FunCoup" id="Q6J756">
    <property type="interactions" value="11"/>
</dbReference>
<dbReference type="STRING" id="10090.ENSMUSP00000113132"/>
<dbReference type="MEROPS" id="C02.013"/>
<dbReference type="iPTMnet" id="Q6J756"/>
<dbReference type="PhosphoSitePlus" id="Q6J756"/>
<dbReference type="SwissPalm" id="Q6J756"/>
<dbReference type="PaxDb" id="10090-ENSMUSP00000113132"/>
<dbReference type="ProteomicsDB" id="281762"/>
<dbReference type="Antibodypedia" id="4328">
    <property type="antibodies" value="173 antibodies from 26 providers"/>
</dbReference>
<dbReference type="DNASU" id="268958"/>
<dbReference type="Ensembl" id="ENSMUST00000120717.8">
    <property type="protein sequence ID" value="ENSMUSP00000113132.2"/>
    <property type="gene ID" value="ENSMUSG00000058626.17"/>
</dbReference>
<dbReference type="GeneID" id="268958"/>
<dbReference type="KEGG" id="mmu:268958"/>
<dbReference type="UCSC" id="uc008crh.1">
    <property type="organism name" value="mouse"/>
</dbReference>
<dbReference type="AGR" id="MGI:1352490"/>
<dbReference type="CTD" id="11131"/>
<dbReference type="MGI" id="MGI:1352490">
    <property type="gene designation" value="Capn11"/>
</dbReference>
<dbReference type="VEuPathDB" id="HostDB:ENSMUSG00000058626"/>
<dbReference type="eggNOG" id="KOG0045">
    <property type="taxonomic scope" value="Eukaryota"/>
</dbReference>
<dbReference type="GeneTree" id="ENSGT00940000158672"/>
<dbReference type="HOGENOM" id="CLU_010982_0_1_1"/>
<dbReference type="InParanoid" id="Q6J756"/>
<dbReference type="OMA" id="KVNNKVM"/>
<dbReference type="OrthoDB" id="424753at2759"/>
<dbReference type="PhylomeDB" id="Q6J756"/>
<dbReference type="TreeFam" id="TF314748"/>
<dbReference type="BRENDA" id="3.4.22.B31">
    <property type="organism ID" value="3474"/>
</dbReference>
<dbReference type="Reactome" id="R-MMU-1474228">
    <property type="pathway name" value="Degradation of the extracellular matrix"/>
</dbReference>
<dbReference type="BioGRID-ORCS" id="268958">
    <property type="hits" value="0 hits in 80 CRISPR screens"/>
</dbReference>
<dbReference type="ChiTaRS" id="Capn11">
    <property type="organism name" value="mouse"/>
</dbReference>
<dbReference type="PRO" id="PR:Q6J756"/>
<dbReference type="Proteomes" id="UP000000589">
    <property type="component" value="Chromosome 17"/>
</dbReference>
<dbReference type="RNAct" id="Q6J756">
    <property type="molecule type" value="protein"/>
</dbReference>
<dbReference type="Bgee" id="ENSMUSG00000058626">
    <property type="expression patterns" value="Expressed in spermatocyte and 37 other cell types or tissues"/>
</dbReference>
<dbReference type="ExpressionAtlas" id="Q6J756">
    <property type="expression patterns" value="baseline and differential"/>
</dbReference>
<dbReference type="GO" id="GO:0001669">
    <property type="term" value="C:acrosomal vesicle"/>
    <property type="evidence" value="ECO:0000314"/>
    <property type="project" value="MGI"/>
</dbReference>
<dbReference type="GO" id="GO:0005509">
    <property type="term" value="F:calcium ion binding"/>
    <property type="evidence" value="ECO:0007669"/>
    <property type="project" value="InterPro"/>
</dbReference>
<dbReference type="GO" id="GO:0004198">
    <property type="term" value="F:calcium-dependent cysteine-type endopeptidase activity"/>
    <property type="evidence" value="ECO:0007669"/>
    <property type="project" value="InterPro"/>
</dbReference>
<dbReference type="GO" id="GO:0006508">
    <property type="term" value="P:proteolysis"/>
    <property type="evidence" value="ECO:0007669"/>
    <property type="project" value="UniProtKB-KW"/>
</dbReference>
<dbReference type="CDD" id="cd00214">
    <property type="entry name" value="Calpain_III"/>
    <property type="match status" value="1"/>
</dbReference>
<dbReference type="CDD" id="cd00044">
    <property type="entry name" value="CysPc"/>
    <property type="match status" value="1"/>
</dbReference>
<dbReference type="CDD" id="cd16193">
    <property type="entry name" value="EFh_PEF_CAPN11"/>
    <property type="match status" value="1"/>
</dbReference>
<dbReference type="FunFam" id="2.60.120.380:FF:000001">
    <property type="entry name" value="Calpain-1 catalytic subunit"/>
    <property type="match status" value="1"/>
</dbReference>
<dbReference type="FunFam" id="3.90.70.10:FF:000001">
    <property type="entry name" value="Calpain-1 catalytic subunit"/>
    <property type="match status" value="1"/>
</dbReference>
<dbReference type="FunFam" id="1.10.238.10:FF:000065">
    <property type="entry name" value="calpain-3 isoform X1"/>
    <property type="match status" value="1"/>
</dbReference>
<dbReference type="Gene3D" id="2.60.120.380">
    <property type="match status" value="1"/>
</dbReference>
<dbReference type="Gene3D" id="3.90.70.10">
    <property type="entry name" value="Cysteine proteinases"/>
    <property type="match status" value="1"/>
</dbReference>
<dbReference type="Gene3D" id="1.10.238.10">
    <property type="entry name" value="EF-hand"/>
    <property type="match status" value="1"/>
</dbReference>
<dbReference type="InterPro" id="IPR033883">
    <property type="entry name" value="C2_III"/>
</dbReference>
<dbReference type="InterPro" id="IPR022684">
    <property type="entry name" value="Calpain_cysteine_protease"/>
</dbReference>
<dbReference type="InterPro" id="IPR022682">
    <property type="entry name" value="Calpain_domain_III"/>
</dbReference>
<dbReference type="InterPro" id="IPR022683">
    <property type="entry name" value="Calpain_III"/>
</dbReference>
<dbReference type="InterPro" id="IPR036213">
    <property type="entry name" value="Calpain_III_sf"/>
</dbReference>
<dbReference type="InterPro" id="IPR011992">
    <property type="entry name" value="EF-hand-dom_pair"/>
</dbReference>
<dbReference type="InterPro" id="IPR018247">
    <property type="entry name" value="EF_Hand_1_Ca_BS"/>
</dbReference>
<dbReference type="InterPro" id="IPR002048">
    <property type="entry name" value="EF_hand_dom"/>
</dbReference>
<dbReference type="InterPro" id="IPR038765">
    <property type="entry name" value="Papain-like_cys_pep_sf"/>
</dbReference>
<dbReference type="InterPro" id="IPR000169">
    <property type="entry name" value="Pept_cys_AS"/>
</dbReference>
<dbReference type="InterPro" id="IPR001300">
    <property type="entry name" value="Peptidase_C2_calpain_cat"/>
</dbReference>
<dbReference type="PANTHER" id="PTHR10183">
    <property type="entry name" value="CALPAIN"/>
    <property type="match status" value="1"/>
</dbReference>
<dbReference type="PANTHER" id="PTHR10183:SF322">
    <property type="entry name" value="CALPAIN-11"/>
    <property type="match status" value="1"/>
</dbReference>
<dbReference type="Pfam" id="PF01067">
    <property type="entry name" value="Calpain_III"/>
    <property type="match status" value="1"/>
</dbReference>
<dbReference type="Pfam" id="PF00648">
    <property type="entry name" value="Peptidase_C2"/>
    <property type="match status" value="1"/>
</dbReference>
<dbReference type="PRINTS" id="PR00704">
    <property type="entry name" value="CALPAIN"/>
</dbReference>
<dbReference type="SMART" id="SM00720">
    <property type="entry name" value="calpain_III"/>
    <property type="match status" value="1"/>
</dbReference>
<dbReference type="SMART" id="SM00230">
    <property type="entry name" value="CysPc"/>
    <property type="match status" value="1"/>
</dbReference>
<dbReference type="SMART" id="SM00054">
    <property type="entry name" value="EFh"/>
    <property type="match status" value="2"/>
</dbReference>
<dbReference type="SUPFAM" id="SSF49758">
    <property type="entry name" value="Calpain large subunit, middle domain (domain III)"/>
    <property type="match status" value="1"/>
</dbReference>
<dbReference type="SUPFAM" id="SSF54001">
    <property type="entry name" value="Cysteine proteinases"/>
    <property type="match status" value="1"/>
</dbReference>
<dbReference type="SUPFAM" id="SSF47473">
    <property type="entry name" value="EF-hand"/>
    <property type="match status" value="1"/>
</dbReference>
<dbReference type="PROSITE" id="PS50203">
    <property type="entry name" value="CALPAIN_CAT"/>
    <property type="match status" value="1"/>
</dbReference>
<dbReference type="PROSITE" id="PS00018">
    <property type="entry name" value="EF_HAND_1"/>
    <property type="match status" value="2"/>
</dbReference>
<dbReference type="PROSITE" id="PS50222">
    <property type="entry name" value="EF_HAND_2"/>
    <property type="match status" value="2"/>
</dbReference>
<dbReference type="PROSITE" id="PS00139">
    <property type="entry name" value="THIOL_PROTEASE_CYS"/>
    <property type="match status" value="1"/>
</dbReference>
<organism>
    <name type="scientific">Mus musculus</name>
    <name type="common">Mouse</name>
    <dbReference type="NCBI Taxonomy" id="10090"/>
    <lineage>
        <taxon>Eukaryota</taxon>
        <taxon>Metazoa</taxon>
        <taxon>Chordata</taxon>
        <taxon>Craniata</taxon>
        <taxon>Vertebrata</taxon>
        <taxon>Euteleostomi</taxon>
        <taxon>Mammalia</taxon>
        <taxon>Eutheria</taxon>
        <taxon>Euarchontoglires</taxon>
        <taxon>Glires</taxon>
        <taxon>Rodentia</taxon>
        <taxon>Myomorpha</taxon>
        <taxon>Muroidea</taxon>
        <taxon>Muridae</taxon>
        <taxon>Murinae</taxon>
        <taxon>Mus</taxon>
        <taxon>Mus</taxon>
    </lineage>
</organism>
<comment type="function">
    <text evidence="1">Calcium-regulated non-lysosomal thiol-protease which catalyzes limited proteolysis of substrates involved in cytoskeletal remodeling and signal transduction.</text>
</comment>
<comment type="subunit">
    <text evidence="1">Heterodimer of a large (catalytic) and a small (regulatory) subunit.</text>
</comment>
<comment type="subcellular location">
    <subcellularLocation>
        <location evidence="6">Cytoplasmic vesicle</location>
        <location evidence="6">Secretory vesicle</location>
        <location evidence="6">Acrosome</location>
    </subcellularLocation>
</comment>
<comment type="tissue specificity">
    <text evidence="5 6">Expressed exclusively in testis, where it is restricted to spermatocytes and during the later stages of meiosis (at protein level).</text>
</comment>
<comment type="similarity">
    <text evidence="2">Belongs to the peptidase C2 family.</text>
</comment>
<gene>
    <name evidence="8" type="primary">Capn11</name>
</gene>
<accession>Q6J756</accession>
<name>CAN11_MOUSE</name>
<proteinExistence type="evidence at protein level"/>
<feature type="chain" id="PRO_0000356219" description="Calpain-11">
    <location>
        <begin position="1"/>
        <end position="714"/>
    </location>
</feature>
<feature type="domain" description="Calpain catalytic" evidence="3">
    <location>
        <begin position="55"/>
        <end position="354"/>
    </location>
</feature>
<feature type="domain" description="EF-hand 1" evidence="4">
    <location>
        <begin position="586"/>
        <end position="621"/>
    </location>
</feature>
<feature type="domain" description="EF-hand 2" evidence="4">
    <location>
        <begin position="623"/>
        <end position="651"/>
    </location>
</feature>
<feature type="region of interest" description="Domain III" evidence="1">
    <location>
        <begin position="355"/>
        <end position="527"/>
    </location>
</feature>
<feature type="region of interest" description="Linker" evidence="1">
    <location>
        <begin position="528"/>
        <end position="543"/>
    </location>
</feature>
<feature type="region of interest" description="Domain IV" evidence="1">
    <location>
        <begin position="544"/>
        <end position="713"/>
    </location>
</feature>
<feature type="active site" evidence="2">
    <location>
        <position position="115"/>
    </location>
</feature>
<feature type="active site" evidence="2">
    <location>
        <position position="272"/>
    </location>
</feature>
<feature type="active site" evidence="2">
    <location>
        <position position="296"/>
    </location>
</feature>
<feature type="binding site" evidence="4">
    <location>
        <position position="599"/>
    </location>
    <ligand>
        <name>Ca(2+)</name>
        <dbReference type="ChEBI" id="CHEBI:29108"/>
        <label>1</label>
    </ligand>
</feature>
<feature type="binding site" evidence="4">
    <location>
        <position position="601"/>
    </location>
    <ligand>
        <name>Ca(2+)</name>
        <dbReference type="ChEBI" id="CHEBI:29108"/>
        <label>1</label>
    </ligand>
</feature>
<feature type="binding site" evidence="4">
    <location>
        <position position="603"/>
    </location>
    <ligand>
        <name>Ca(2+)</name>
        <dbReference type="ChEBI" id="CHEBI:29108"/>
        <label>1</label>
    </ligand>
</feature>
<feature type="binding site" evidence="4">
    <location>
        <position position="605"/>
    </location>
    <ligand>
        <name>Ca(2+)</name>
        <dbReference type="ChEBI" id="CHEBI:29108"/>
        <label>1</label>
    </ligand>
</feature>
<feature type="binding site" evidence="4">
    <location>
        <position position="610"/>
    </location>
    <ligand>
        <name>Ca(2+)</name>
        <dbReference type="ChEBI" id="CHEBI:29108"/>
        <label>1</label>
    </ligand>
</feature>
<feature type="binding site" evidence="4">
    <location>
        <position position="629"/>
    </location>
    <ligand>
        <name>Ca(2+)</name>
        <dbReference type="ChEBI" id="CHEBI:29108"/>
        <label>2</label>
    </ligand>
</feature>
<feature type="binding site" evidence="4">
    <location>
        <position position="631"/>
    </location>
    <ligand>
        <name>Ca(2+)</name>
        <dbReference type="ChEBI" id="CHEBI:29108"/>
        <label>2</label>
    </ligand>
</feature>
<feature type="binding site" evidence="4">
    <location>
        <position position="633"/>
    </location>
    <ligand>
        <name>Ca(2+)</name>
        <dbReference type="ChEBI" id="CHEBI:29108"/>
        <label>2</label>
    </ligand>
</feature>
<feature type="binding site" evidence="4">
    <location>
        <position position="635"/>
    </location>
    <ligand>
        <name>Ca(2+)</name>
        <dbReference type="ChEBI" id="CHEBI:29108"/>
        <label>2</label>
    </ligand>
</feature>
<feature type="binding site" evidence="4">
    <location>
        <position position="640"/>
    </location>
    <ligand>
        <name>Ca(2+)</name>
        <dbReference type="ChEBI" id="CHEBI:29108"/>
        <label>2</label>
    </ligand>
</feature>
<protein>
    <recommendedName>
        <fullName evidence="8">Calpain-11</fullName>
        <ecNumber>3.4.22.-</ecNumber>
    </recommendedName>
    <alternativeName>
        <fullName evidence="1">Calcium-activated neutral proteinase 11</fullName>
        <shortName evidence="1">CANP 11</shortName>
    </alternativeName>
</protein>
<reference evidence="7 8" key="1">
    <citation type="journal article" date="2006" name="Mol. Reprod. Dev.">
        <title>Calpain 11 is unique to mouse spermatogenic cells.</title>
        <authorList>
            <person name="Ben-Aharon I."/>
            <person name="Brown P.R."/>
            <person name="Shalgi R."/>
            <person name="Eddy E.M."/>
        </authorList>
    </citation>
    <scope>NUCLEOTIDE SEQUENCE [MRNA]</scope>
    <scope>SUBCELLULAR LOCATION</scope>
    <scope>TISSUE SPECIFICITY</scope>
    <source>
        <strain evidence="8">BALB/cJ</strain>
        <tissue evidence="8">Testis</tissue>
    </source>
</reference>
<reference evidence="7" key="2">
    <citation type="journal article" date="1999" name="Mech. Dev.">
        <title>Diverse mRNA expression patterns of the mouse calpain genes Capn5, Capn6 and Capn11 during development.</title>
        <authorList>
            <person name="Dear T.N."/>
            <person name="Boehm T."/>
        </authorList>
    </citation>
    <scope>TISSUE SPECIFICITY</scope>
</reference>
<reference key="3">
    <citation type="journal article" date="2010" name="Cell">
        <title>A tissue-specific atlas of mouse protein phosphorylation and expression.</title>
        <authorList>
            <person name="Huttlin E.L."/>
            <person name="Jedrychowski M.P."/>
            <person name="Elias J.E."/>
            <person name="Goswami T."/>
            <person name="Rad R."/>
            <person name="Beausoleil S.A."/>
            <person name="Villen J."/>
            <person name="Haas W."/>
            <person name="Sowa M.E."/>
            <person name="Gygi S.P."/>
        </authorList>
    </citation>
    <scope>IDENTIFICATION BY MASS SPECTROMETRY [LARGE SCALE ANALYSIS]</scope>
    <source>
        <tissue>Testis</tissue>
    </source>
</reference>